<accession>B7UJQ9</accession>
<gene>
    <name evidence="1" type="primary">tig</name>
    <name type="ordered locus">E2348C_0371</name>
</gene>
<dbReference type="EC" id="5.2.1.8" evidence="1"/>
<dbReference type="EMBL" id="FM180568">
    <property type="protein sequence ID" value="CAS07919.1"/>
    <property type="molecule type" value="Genomic_DNA"/>
</dbReference>
<dbReference type="RefSeq" id="WP_001198386.1">
    <property type="nucleotide sequence ID" value="NC_011601.1"/>
</dbReference>
<dbReference type="SMR" id="B7UJQ9"/>
<dbReference type="GeneID" id="75202861"/>
<dbReference type="KEGG" id="ecg:E2348C_0371"/>
<dbReference type="HOGENOM" id="CLU_033058_2_0_6"/>
<dbReference type="Proteomes" id="UP000008205">
    <property type="component" value="Chromosome"/>
</dbReference>
<dbReference type="GO" id="GO:0005737">
    <property type="term" value="C:cytoplasm"/>
    <property type="evidence" value="ECO:0007669"/>
    <property type="project" value="UniProtKB-SubCell"/>
</dbReference>
<dbReference type="GO" id="GO:0003755">
    <property type="term" value="F:peptidyl-prolyl cis-trans isomerase activity"/>
    <property type="evidence" value="ECO:0007669"/>
    <property type="project" value="UniProtKB-UniRule"/>
</dbReference>
<dbReference type="GO" id="GO:0044183">
    <property type="term" value="F:protein folding chaperone"/>
    <property type="evidence" value="ECO:0007669"/>
    <property type="project" value="TreeGrafter"/>
</dbReference>
<dbReference type="GO" id="GO:0043022">
    <property type="term" value="F:ribosome binding"/>
    <property type="evidence" value="ECO:0007669"/>
    <property type="project" value="TreeGrafter"/>
</dbReference>
<dbReference type="GO" id="GO:0051083">
    <property type="term" value="P:'de novo' cotranslational protein folding"/>
    <property type="evidence" value="ECO:0007669"/>
    <property type="project" value="TreeGrafter"/>
</dbReference>
<dbReference type="GO" id="GO:0051301">
    <property type="term" value="P:cell division"/>
    <property type="evidence" value="ECO:0007669"/>
    <property type="project" value="UniProtKB-KW"/>
</dbReference>
<dbReference type="GO" id="GO:0061077">
    <property type="term" value="P:chaperone-mediated protein folding"/>
    <property type="evidence" value="ECO:0007669"/>
    <property type="project" value="TreeGrafter"/>
</dbReference>
<dbReference type="GO" id="GO:0015031">
    <property type="term" value="P:protein transport"/>
    <property type="evidence" value="ECO:0007669"/>
    <property type="project" value="UniProtKB-UniRule"/>
</dbReference>
<dbReference type="GO" id="GO:0043335">
    <property type="term" value="P:protein unfolding"/>
    <property type="evidence" value="ECO:0007669"/>
    <property type="project" value="TreeGrafter"/>
</dbReference>
<dbReference type="FunFam" id="1.10.3120.10:FF:000001">
    <property type="entry name" value="Trigger factor"/>
    <property type="match status" value="1"/>
</dbReference>
<dbReference type="FunFam" id="3.10.50.40:FF:000001">
    <property type="entry name" value="Trigger factor"/>
    <property type="match status" value="1"/>
</dbReference>
<dbReference type="FunFam" id="3.30.70.1050:FF:000001">
    <property type="entry name" value="Trigger factor"/>
    <property type="match status" value="1"/>
</dbReference>
<dbReference type="Gene3D" id="3.10.50.40">
    <property type="match status" value="1"/>
</dbReference>
<dbReference type="Gene3D" id="3.30.70.1050">
    <property type="entry name" value="Trigger factor ribosome-binding domain"/>
    <property type="match status" value="1"/>
</dbReference>
<dbReference type="Gene3D" id="1.10.3120.10">
    <property type="entry name" value="Trigger factor, C-terminal domain"/>
    <property type="match status" value="1"/>
</dbReference>
<dbReference type="HAMAP" id="MF_00303">
    <property type="entry name" value="Trigger_factor_Tig"/>
    <property type="match status" value="1"/>
</dbReference>
<dbReference type="InterPro" id="IPR046357">
    <property type="entry name" value="PPIase_dom_sf"/>
</dbReference>
<dbReference type="InterPro" id="IPR001179">
    <property type="entry name" value="PPIase_FKBP_dom"/>
</dbReference>
<dbReference type="InterPro" id="IPR005215">
    <property type="entry name" value="Trig_fac"/>
</dbReference>
<dbReference type="InterPro" id="IPR008880">
    <property type="entry name" value="Trigger_fac_C"/>
</dbReference>
<dbReference type="InterPro" id="IPR037041">
    <property type="entry name" value="Trigger_fac_C_sf"/>
</dbReference>
<dbReference type="InterPro" id="IPR008881">
    <property type="entry name" value="Trigger_fac_ribosome-bd_bac"/>
</dbReference>
<dbReference type="InterPro" id="IPR036611">
    <property type="entry name" value="Trigger_fac_ribosome-bd_sf"/>
</dbReference>
<dbReference type="InterPro" id="IPR027304">
    <property type="entry name" value="Trigger_fact/SurA_dom_sf"/>
</dbReference>
<dbReference type="NCBIfam" id="TIGR00115">
    <property type="entry name" value="tig"/>
    <property type="match status" value="1"/>
</dbReference>
<dbReference type="PANTHER" id="PTHR30560">
    <property type="entry name" value="TRIGGER FACTOR CHAPERONE AND PEPTIDYL-PROLYL CIS/TRANS ISOMERASE"/>
    <property type="match status" value="1"/>
</dbReference>
<dbReference type="PANTHER" id="PTHR30560:SF3">
    <property type="entry name" value="TRIGGER FACTOR-LIKE PROTEIN TIG, CHLOROPLASTIC"/>
    <property type="match status" value="1"/>
</dbReference>
<dbReference type="Pfam" id="PF00254">
    <property type="entry name" value="FKBP_C"/>
    <property type="match status" value="1"/>
</dbReference>
<dbReference type="Pfam" id="PF05698">
    <property type="entry name" value="Trigger_C"/>
    <property type="match status" value="1"/>
</dbReference>
<dbReference type="Pfam" id="PF05697">
    <property type="entry name" value="Trigger_N"/>
    <property type="match status" value="1"/>
</dbReference>
<dbReference type="PIRSF" id="PIRSF003095">
    <property type="entry name" value="Trigger_factor"/>
    <property type="match status" value="1"/>
</dbReference>
<dbReference type="SUPFAM" id="SSF54534">
    <property type="entry name" value="FKBP-like"/>
    <property type="match status" value="1"/>
</dbReference>
<dbReference type="SUPFAM" id="SSF109998">
    <property type="entry name" value="Triger factor/SurA peptide-binding domain-like"/>
    <property type="match status" value="1"/>
</dbReference>
<dbReference type="SUPFAM" id="SSF102735">
    <property type="entry name" value="Trigger factor ribosome-binding domain"/>
    <property type="match status" value="1"/>
</dbReference>
<dbReference type="PROSITE" id="PS50059">
    <property type="entry name" value="FKBP_PPIASE"/>
    <property type="match status" value="1"/>
</dbReference>
<keyword id="KW-0131">Cell cycle</keyword>
<keyword id="KW-0132">Cell division</keyword>
<keyword id="KW-0143">Chaperone</keyword>
<keyword id="KW-0963">Cytoplasm</keyword>
<keyword id="KW-0413">Isomerase</keyword>
<keyword id="KW-1185">Reference proteome</keyword>
<keyword id="KW-0697">Rotamase</keyword>
<reference key="1">
    <citation type="journal article" date="2009" name="J. Bacteriol.">
        <title>Complete genome sequence and comparative genome analysis of enteropathogenic Escherichia coli O127:H6 strain E2348/69.</title>
        <authorList>
            <person name="Iguchi A."/>
            <person name="Thomson N.R."/>
            <person name="Ogura Y."/>
            <person name="Saunders D."/>
            <person name="Ooka T."/>
            <person name="Henderson I.R."/>
            <person name="Harris D."/>
            <person name="Asadulghani M."/>
            <person name="Kurokawa K."/>
            <person name="Dean P."/>
            <person name="Kenny B."/>
            <person name="Quail M.A."/>
            <person name="Thurston S."/>
            <person name="Dougan G."/>
            <person name="Hayashi T."/>
            <person name="Parkhill J."/>
            <person name="Frankel G."/>
        </authorList>
    </citation>
    <scope>NUCLEOTIDE SEQUENCE [LARGE SCALE GENOMIC DNA]</scope>
    <source>
        <strain>E2348/69 / EPEC</strain>
    </source>
</reference>
<sequence length="432" mass="48193">MQVSVETTQGLGRRVTITIAADSIETAVKSELVNVAKKVRIDGFRKGKVPMNIVAQRYGASVRQDVLGDLMSRNFIDAIIKEKINPAGAPTYVPGEYKLGEDFTYSVEFEVYPEVELQGLEAIEVEKPIVEVTDADVDGMLDTLRKQQATWKEKDGAVEAEDRVTIDFTGSVDGEEFEGGKASDFVLAMGQGRMIPGFEDGIKGHKAGEEFTIDVTFPEEYHAENLKGKAAKFAINLKKVEERELPELTAEFIKRFGVEDGSVEGLRAEVRKNMERELKSAIRNRVKSQAIEGLVKANDIDVPAALIDSEIDVLRRQAAQRFGGNEKQALELPRELFEEQAKRRVVVGLLLGEVIRTNELKADEERVKGLIEEMASAYEDPKEVIEFYSKNKELMDNMRNVALEEQAVEAVLAKAKVTEKETTFNELMNQQA</sequence>
<evidence type="ECO:0000255" key="1">
    <source>
        <dbReference type="HAMAP-Rule" id="MF_00303"/>
    </source>
</evidence>
<name>TIG_ECO27</name>
<comment type="function">
    <text evidence="1">Involved in protein export. Acts as a chaperone by maintaining the newly synthesized protein in an open conformation. Functions as a peptidyl-prolyl cis-trans isomerase.</text>
</comment>
<comment type="catalytic activity">
    <reaction evidence="1">
        <text>[protein]-peptidylproline (omega=180) = [protein]-peptidylproline (omega=0)</text>
        <dbReference type="Rhea" id="RHEA:16237"/>
        <dbReference type="Rhea" id="RHEA-COMP:10747"/>
        <dbReference type="Rhea" id="RHEA-COMP:10748"/>
        <dbReference type="ChEBI" id="CHEBI:83833"/>
        <dbReference type="ChEBI" id="CHEBI:83834"/>
        <dbReference type="EC" id="5.2.1.8"/>
    </reaction>
</comment>
<comment type="subunit">
    <text evidence="1">Homodimer and monomer. In vivo most of the ribosomes are in complex with monomeric TF. Uncomplexed TF, however, is in a monomer-dimer equilibrium with approximately two thirds of TF existing in a dimeric state.</text>
</comment>
<comment type="subcellular location">
    <subcellularLocation>
        <location>Cytoplasm</location>
    </subcellularLocation>
    <text evidence="1">About half TF is bound to the ribosome near the polypeptide exit tunnel while the other half is free in the cytoplasm.</text>
</comment>
<comment type="domain">
    <text evidence="1">Consists of 3 domains; the N-terminus binds the ribosome, the middle domain has PPIase activity, while the C-terminus has intrinsic chaperone activity on its own.</text>
</comment>
<comment type="similarity">
    <text evidence="1">Belongs to the FKBP-type PPIase family. Tig subfamily.</text>
</comment>
<feature type="chain" id="PRO_1000198157" description="Trigger factor">
    <location>
        <begin position="1"/>
        <end position="432"/>
    </location>
</feature>
<feature type="domain" description="PPIase FKBP-type" evidence="1">
    <location>
        <begin position="161"/>
        <end position="246"/>
    </location>
</feature>
<proteinExistence type="inferred from homology"/>
<protein>
    <recommendedName>
        <fullName evidence="1">Trigger factor</fullName>
        <shortName evidence="1">TF</shortName>
        <ecNumber evidence="1">5.2.1.8</ecNumber>
    </recommendedName>
    <alternativeName>
        <fullName evidence="1">PPIase</fullName>
    </alternativeName>
</protein>
<organism>
    <name type="scientific">Escherichia coli O127:H6 (strain E2348/69 / EPEC)</name>
    <dbReference type="NCBI Taxonomy" id="574521"/>
    <lineage>
        <taxon>Bacteria</taxon>
        <taxon>Pseudomonadati</taxon>
        <taxon>Pseudomonadota</taxon>
        <taxon>Gammaproteobacteria</taxon>
        <taxon>Enterobacterales</taxon>
        <taxon>Enterobacteriaceae</taxon>
        <taxon>Escherichia</taxon>
    </lineage>
</organism>